<accession>Q9ZHA2</accession>
<keyword id="KW-0131">Cell cycle</keyword>
<keyword id="KW-0132">Cell division</keyword>
<keyword id="KW-0963">Cytoplasm</keyword>
<keyword id="KW-0717">Septation</keyword>
<gene>
    <name evidence="1" type="primary">sepF</name>
</gene>
<reference key="1">
    <citation type="journal article" date="1998" name="Microbiology">
        <title>Unconventional organization of the division and cell wall gene cluster of Streptococcus pneumoniae.</title>
        <authorList>
            <person name="Massidda O."/>
            <person name="Anderluzzi D."/>
            <person name="Friedli L."/>
            <person name="Feger G."/>
        </authorList>
    </citation>
    <scope>NUCLEOTIDE SEQUENCE [GENOMIC DNA]</scope>
    <source>
        <strain>ATCC 14154 / Rose</strain>
    </source>
</reference>
<comment type="function">
    <text evidence="1">Cell division protein that is part of the divisome complex and is recruited early to the Z-ring. Probably stimulates Z-ring formation, perhaps through the cross-linking of FtsZ protofilaments. Its function overlaps with FtsA.</text>
</comment>
<comment type="subunit">
    <text evidence="1">Homodimer. Interacts with FtsZ.</text>
</comment>
<comment type="subcellular location">
    <subcellularLocation>
        <location evidence="1">Cytoplasm</location>
    </subcellularLocation>
    <text evidence="1">Localizes to the division site, in a FtsZ-dependent manner.</text>
</comment>
<comment type="similarity">
    <text evidence="1">Belongs to the SepF family.</text>
</comment>
<comment type="sequence caution" evidence="3">
    <conflict type="erroneous initiation">
        <sequence resource="EMBL-CDS" id="AAC95461"/>
    </conflict>
</comment>
<name>SEPF_STAAU</name>
<protein>
    <recommendedName>
        <fullName evidence="1">Cell division protein SepF</fullName>
    </recommendedName>
</protein>
<feature type="chain" id="PRO_0000334073" description="Cell division protein SepF">
    <location>
        <begin position="1"/>
        <end position="187"/>
    </location>
</feature>
<feature type="region of interest" description="Disordered" evidence="2">
    <location>
        <begin position="21"/>
        <end position="97"/>
    </location>
</feature>
<feature type="compositionally biased region" description="Polar residues" evidence="2">
    <location>
        <begin position="38"/>
        <end position="63"/>
    </location>
</feature>
<feature type="compositionally biased region" description="Polar residues" evidence="2">
    <location>
        <begin position="70"/>
        <end position="97"/>
    </location>
</feature>
<evidence type="ECO:0000255" key="1">
    <source>
        <dbReference type="HAMAP-Rule" id="MF_01197"/>
    </source>
</evidence>
<evidence type="ECO:0000256" key="2">
    <source>
        <dbReference type="SAM" id="MobiDB-lite"/>
    </source>
</evidence>
<evidence type="ECO:0000305" key="3"/>
<dbReference type="EMBL" id="AF068904">
    <property type="protein sequence ID" value="AAC95461.1"/>
    <property type="status" value="ALT_INIT"/>
    <property type="molecule type" value="Genomic_DNA"/>
</dbReference>
<dbReference type="RefSeq" id="WP_000018608.1">
    <property type="nucleotide sequence ID" value="NZ_WYDB01000002.1"/>
</dbReference>
<dbReference type="SMR" id="Q9ZHA2"/>
<dbReference type="OMA" id="ASERHYQ"/>
<dbReference type="OrthoDB" id="9815206at2"/>
<dbReference type="GO" id="GO:0005737">
    <property type="term" value="C:cytoplasm"/>
    <property type="evidence" value="ECO:0007669"/>
    <property type="project" value="UniProtKB-SubCell"/>
</dbReference>
<dbReference type="GO" id="GO:0000917">
    <property type="term" value="P:division septum assembly"/>
    <property type="evidence" value="ECO:0007669"/>
    <property type="project" value="UniProtKB-KW"/>
</dbReference>
<dbReference type="GO" id="GO:0043093">
    <property type="term" value="P:FtsZ-dependent cytokinesis"/>
    <property type="evidence" value="ECO:0007669"/>
    <property type="project" value="UniProtKB-UniRule"/>
</dbReference>
<dbReference type="Gene3D" id="3.30.110.150">
    <property type="entry name" value="SepF-like protein"/>
    <property type="match status" value="1"/>
</dbReference>
<dbReference type="HAMAP" id="MF_01197">
    <property type="entry name" value="SepF"/>
    <property type="match status" value="1"/>
</dbReference>
<dbReference type="InterPro" id="IPR023052">
    <property type="entry name" value="Cell_div_SepF"/>
</dbReference>
<dbReference type="InterPro" id="IPR007561">
    <property type="entry name" value="Cell_div_SepF/SepF-rel"/>
</dbReference>
<dbReference type="InterPro" id="IPR038594">
    <property type="entry name" value="SepF-like_sf"/>
</dbReference>
<dbReference type="PANTHER" id="PTHR35798">
    <property type="entry name" value="CELL DIVISION PROTEIN SEPF"/>
    <property type="match status" value="1"/>
</dbReference>
<dbReference type="PANTHER" id="PTHR35798:SF1">
    <property type="entry name" value="CELL DIVISION PROTEIN SEPF"/>
    <property type="match status" value="1"/>
</dbReference>
<dbReference type="Pfam" id="PF04472">
    <property type="entry name" value="SepF"/>
    <property type="match status" value="1"/>
</dbReference>
<proteinExistence type="inferred from homology"/>
<sequence length="187" mass="21023">MSHLALKDLFSGFFVIDDEEEVEVPDKQQQVNEAPAKEQSQQTTKQNAIKSVPQKSASRYTTTSEERNNRMSNYSKNNSRNVVTMNNATPNNASQESSKMCLFEPRVFSDTQDIADELKNRRATLVNLQRIDKVSAKRIIDFLSGTVYAIGGDIQRVGTDIFLCTPDNVEVAGSITDHIENMEHSFD</sequence>
<organism>
    <name type="scientific">Staphylococcus aureus</name>
    <dbReference type="NCBI Taxonomy" id="1280"/>
    <lineage>
        <taxon>Bacteria</taxon>
        <taxon>Bacillati</taxon>
        <taxon>Bacillota</taxon>
        <taxon>Bacilli</taxon>
        <taxon>Bacillales</taxon>
        <taxon>Staphylococcaceae</taxon>
        <taxon>Staphylococcus</taxon>
    </lineage>
</organism>